<protein>
    <recommendedName>
        <fullName>Uncharacterized protein HI_0869</fullName>
    </recommendedName>
</protein>
<keyword id="KW-1185">Reference proteome</keyword>
<dbReference type="EMBL" id="L42023">
    <property type="protein sequence ID" value="AAC22528.1"/>
    <property type="molecule type" value="Genomic_DNA"/>
</dbReference>
<dbReference type="PIR" id="A64015">
    <property type="entry name" value="A64015"/>
</dbReference>
<dbReference type="SMR" id="P44064"/>
<dbReference type="STRING" id="71421.HI_0869"/>
<dbReference type="CAZy" id="GT2">
    <property type="family name" value="Glycosyltransferase Family 2"/>
</dbReference>
<dbReference type="EnsemblBacteria" id="AAC22528">
    <property type="protein sequence ID" value="AAC22528"/>
    <property type="gene ID" value="HI_0869"/>
</dbReference>
<dbReference type="KEGG" id="hin:HI_0869"/>
<dbReference type="eggNOG" id="COG1216">
    <property type="taxonomic scope" value="Bacteria"/>
</dbReference>
<dbReference type="HOGENOM" id="CLU_1459371_0_0_6"/>
<dbReference type="Proteomes" id="UP000000579">
    <property type="component" value="Chromosome"/>
</dbReference>
<dbReference type="Gene3D" id="3.90.550.10">
    <property type="entry name" value="Spore Coat Polysaccharide Biosynthesis Protein SpsA, Chain A"/>
    <property type="match status" value="1"/>
</dbReference>
<dbReference type="InterPro" id="IPR001173">
    <property type="entry name" value="Glyco_trans_2-like"/>
</dbReference>
<dbReference type="InterPro" id="IPR029044">
    <property type="entry name" value="Nucleotide-diphossugar_trans"/>
</dbReference>
<dbReference type="Pfam" id="PF00535">
    <property type="entry name" value="Glycos_transf_2"/>
    <property type="match status" value="1"/>
</dbReference>
<dbReference type="SUPFAM" id="SSF53448">
    <property type="entry name" value="Nucleotide-diphospho-sugar transferases"/>
    <property type="match status" value="1"/>
</dbReference>
<reference key="1">
    <citation type="journal article" date="1995" name="Science">
        <title>Whole-genome random sequencing and assembly of Haemophilus influenzae Rd.</title>
        <authorList>
            <person name="Fleischmann R.D."/>
            <person name="Adams M.D."/>
            <person name="White O."/>
            <person name="Clayton R.A."/>
            <person name="Kirkness E.F."/>
            <person name="Kerlavage A.R."/>
            <person name="Bult C.J."/>
            <person name="Tomb J.-F."/>
            <person name="Dougherty B.A."/>
            <person name="Merrick J.M."/>
            <person name="McKenney K."/>
            <person name="Sutton G.G."/>
            <person name="FitzHugh W."/>
            <person name="Fields C.A."/>
            <person name="Gocayne J.D."/>
            <person name="Scott J.D."/>
            <person name="Shirley R."/>
            <person name="Liu L.-I."/>
            <person name="Glodek A."/>
            <person name="Kelley J.M."/>
            <person name="Weidman J.F."/>
            <person name="Phillips C.A."/>
            <person name="Spriggs T."/>
            <person name="Hedblom E."/>
            <person name="Cotton M.D."/>
            <person name="Utterback T.R."/>
            <person name="Hanna M.C."/>
            <person name="Nguyen D.T."/>
            <person name="Saudek D.M."/>
            <person name="Brandon R.C."/>
            <person name="Fine L.D."/>
            <person name="Fritchman J.L."/>
            <person name="Fuhrmann J.L."/>
            <person name="Geoghagen N.S.M."/>
            <person name="Gnehm C.L."/>
            <person name="McDonald L.A."/>
            <person name="Small K.V."/>
            <person name="Fraser C.M."/>
            <person name="Smith H.O."/>
            <person name="Venter J.C."/>
        </authorList>
    </citation>
    <scope>NUCLEOTIDE SEQUENCE [LARGE SCALE GENOMIC DNA]</scope>
    <source>
        <strain>ATCC 51907 / DSM 11121 / KW20 / Rd</strain>
    </source>
</reference>
<sequence>MPIMDLLNTRNKNMISLLIISFGRYQEVLETFACVNKYHGNKIELLFLDNNPERELEADLSSIVENNSGILFSYFHTGENLGVAEGRNFLIEKAQGDILITLDDDVEIEDITLLIQKVTDYMANNAKVGALAFNIKNYFTRKALSHEIPHGNKKLDFSQNLLTYYFIGAGHAIREKSLSKSGALP</sequence>
<name>Y869_HAEIN</name>
<feature type="chain" id="PRO_0000077963" description="Uncharacterized protein HI_0869">
    <location>
        <begin position="1"/>
        <end position="185"/>
    </location>
</feature>
<proteinExistence type="predicted"/>
<organism>
    <name type="scientific">Haemophilus influenzae (strain ATCC 51907 / DSM 11121 / KW20 / Rd)</name>
    <dbReference type="NCBI Taxonomy" id="71421"/>
    <lineage>
        <taxon>Bacteria</taxon>
        <taxon>Pseudomonadati</taxon>
        <taxon>Pseudomonadota</taxon>
        <taxon>Gammaproteobacteria</taxon>
        <taxon>Pasteurellales</taxon>
        <taxon>Pasteurellaceae</taxon>
        <taxon>Haemophilus</taxon>
    </lineage>
</organism>
<accession>P44064</accession>
<gene>
    <name type="ordered locus">HI_0869</name>
</gene>